<proteinExistence type="inferred from homology"/>
<reference key="1">
    <citation type="journal article" date="2006" name="J. Bacteriol.">
        <title>The Methanosarcina barkeri genome: comparative analysis with Methanosarcina acetivorans and Methanosarcina mazei reveals extensive rearrangement within methanosarcinal genomes.</title>
        <authorList>
            <person name="Maeder D.L."/>
            <person name="Anderson I."/>
            <person name="Brettin T.S."/>
            <person name="Bruce D.C."/>
            <person name="Gilna P."/>
            <person name="Han C.S."/>
            <person name="Lapidus A."/>
            <person name="Metcalf W.W."/>
            <person name="Saunders E."/>
            <person name="Tapia R."/>
            <person name="Sowers K.R."/>
        </authorList>
    </citation>
    <scope>NUCLEOTIDE SEQUENCE [LARGE SCALE GENOMIC DNA]</scope>
    <source>
        <strain>Fusaro / DSM 804</strain>
    </source>
</reference>
<gene>
    <name evidence="1" type="primary">gfcR2</name>
    <name type="ordered locus">Mbar_A0547</name>
</gene>
<feature type="chain" id="PRO_0000298901" description="Transcriptional regulator GfcR 2">
    <location>
        <begin position="1"/>
        <end position="202"/>
    </location>
</feature>
<comment type="domain">
    <text evidence="1">Contains an N-terminal DNA-binding winged helix-turn-helix domain and a C-terminal regulatory domain (or effector binding domain) resembling phosphoribosyltransferase (PRT) domain.</text>
</comment>
<comment type="similarity">
    <text evidence="1">Belongs to the purine/pyrimidine phosphoribosyltransferase family. GfcR subfamily.</text>
</comment>
<dbReference type="EMBL" id="CP000099">
    <property type="protein sequence ID" value="AAZ69528.1"/>
    <property type="molecule type" value="Genomic_DNA"/>
</dbReference>
<dbReference type="SMR" id="Q46F14"/>
<dbReference type="STRING" id="269797.Mbar_A0547"/>
<dbReference type="PaxDb" id="269797-Mbar_A0547"/>
<dbReference type="KEGG" id="mba:Mbar_A0547"/>
<dbReference type="eggNOG" id="arCOG00028">
    <property type="taxonomic scope" value="Archaea"/>
</dbReference>
<dbReference type="HOGENOM" id="CLU_111001_0_0_2"/>
<dbReference type="OrthoDB" id="68893at2157"/>
<dbReference type="GO" id="GO:0003677">
    <property type="term" value="F:DNA binding"/>
    <property type="evidence" value="ECO:0007669"/>
    <property type="project" value="UniProtKB-UniRule"/>
</dbReference>
<dbReference type="GO" id="GO:0004588">
    <property type="term" value="F:orotate phosphoribosyltransferase activity"/>
    <property type="evidence" value="ECO:0007669"/>
    <property type="project" value="TreeGrafter"/>
</dbReference>
<dbReference type="GO" id="GO:0019856">
    <property type="term" value="P:pyrimidine nucleobase biosynthetic process"/>
    <property type="evidence" value="ECO:0007669"/>
    <property type="project" value="TreeGrafter"/>
</dbReference>
<dbReference type="GO" id="GO:0010468">
    <property type="term" value="P:regulation of gene expression"/>
    <property type="evidence" value="ECO:0007669"/>
    <property type="project" value="UniProtKB-UniRule"/>
</dbReference>
<dbReference type="GO" id="GO:0006222">
    <property type="term" value="P:UMP biosynthetic process"/>
    <property type="evidence" value="ECO:0007669"/>
    <property type="project" value="TreeGrafter"/>
</dbReference>
<dbReference type="CDD" id="cd06223">
    <property type="entry name" value="PRTases_typeI"/>
    <property type="match status" value="1"/>
</dbReference>
<dbReference type="Gene3D" id="3.40.50.2020">
    <property type="match status" value="1"/>
</dbReference>
<dbReference type="HAMAP" id="MF_01214">
    <property type="entry name" value="GfcR"/>
    <property type="match status" value="1"/>
</dbReference>
<dbReference type="InterPro" id="IPR022854">
    <property type="entry name" value="GfcR-like"/>
</dbReference>
<dbReference type="InterPro" id="IPR000836">
    <property type="entry name" value="PRibTrfase_dom"/>
</dbReference>
<dbReference type="InterPro" id="IPR029057">
    <property type="entry name" value="PRTase-like"/>
</dbReference>
<dbReference type="NCBIfam" id="NF002620">
    <property type="entry name" value="PRK02277.1"/>
    <property type="match status" value="1"/>
</dbReference>
<dbReference type="PANTHER" id="PTHR19278">
    <property type="entry name" value="OROTATE PHOSPHORIBOSYLTRANSFERASE"/>
    <property type="match status" value="1"/>
</dbReference>
<dbReference type="PANTHER" id="PTHR19278:SF41">
    <property type="entry name" value="PYRE-LIKE PROTEIN"/>
    <property type="match status" value="1"/>
</dbReference>
<dbReference type="Pfam" id="PF00156">
    <property type="entry name" value="Pribosyltran"/>
    <property type="match status" value="1"/>
</dbReference>
<dbReference type="SUPFAM" id="SSF53271">
    <property type="entry name" value="PRTase-like"/>
    <property type="match status" value="1"/>
</dbReference>
<dbReference type="PROSITE" id="PS00103">
    <property type="entry name" value="PUR_PYR_PR_TRANSFER"/>
    <property type="match status" value="1"/>
</dbReference>
<evidence type="ECO:0000255" key="1">
    <source>
        <dbReference type="HAMAP-Rule" id="MF_01214"/>
    </source>
</evidence>
<name>GFCR2_METBF</name>
<sequence>MKDIEDLIQKAVELQSNGLAMGQIADELNVSRETVTWLLTRSKKEEITPAPKDISVNWNNIGKSAKRLHNISLALCDVALENLEKIGAEVDVVVGVAANGIPLASMMAYELGADLAIYHRKGQETVRAGKGTISRNFGSVAGKNCVIVDDVITTGSTSREVIEQLREMGAKPRVVVVLVDKKGVDTIFNVPIQSLLKVVRLD</sequence>
<keyword id="KW-0238">DNA-binding</keyword>
<keyword id="KW-0804">Transcription</keyword>
<keyword id="KW-0805">Transcription regulation</keyword>
<protein>
    <recommendedName>
        <fullName evidence="1">Transcriptional regulator GfcR 2</fullName>
    </recommendedName>
</protein>
<organism>
    <name type="scientific">Methanosarcina barkeri (strain Fusaro / DSM 804)</name>
    <dbReference type="NCBI Taxonomy" id="269797"/>
    <lineage>
        <taxon>Archaea</taxon>
        <taxon>Methanobacteriati</taxon>
        <taxon>Methanobacteriota</taxon>
        <taxon>Stenosarchaea group</taxon>
        <taxon>Methanomicrobia</taxon>
        <taxon>Methanosarcinales</taxon>
        <taxon>Methanosarcinaceae</taxon>
        <taxon>Methanosarcina</taxon>
    </lineage>
</organism>
<accession>Q46F14</accession>